<organism>
    <name type="scientific">Schizosaccharomyces pombe (strain 972 / ATCC 24843)</name>
    <name type="common">Fission yeast</name>
    <dbReference type="NCBI Taxonomy" id="284812"/>
    <lineage>
        <taxon>Eukaryota</taxon>
        <taxon>Fungi</taxon>
        <taxon>Dikarya</taxon>
        <taxon>Ascomycota</taxon>
        <taxon>Taphrinomycotina</taxon>
        <taxon>Schizosaccharomycetes</taxon>
        <taxon>Schizosaccharomycetales</taxon>
        <taxon>Schizosaccharomycetaceae</taxon>
        <taxon>Schizosaccharomyces</taxon>
    </lineage>
</organism>
<proteinExistence type="inferred from homology"/>
<evidence type="ECO:0000250" key="1"/>
<evidence type="ECO:0000255" key="2"/>
<evidence type="ECO:0000269" key="3">
    <source>
    </source>
</evidence>
<evidence type="ECO:0000305" key="4"/>
<reference key="1">
    <citation type="journal article" date="2002" name="Nature">
        <title>The genome sequence of Schizosaccharomyces pombe.</title>
        <authorList>
            <person name="Wood V."/>
            <person name="Gwilliam R."/>
            <person name="Rajandream M.A."/>
            <person name="Lyne M.H."/>
            <person name="Lyne R."/>
            <person name="Stewart A."/>
            <person name="Sgouros J.G."/>
            <person name="Peat N."/>
            <person name="Hayles J."/>
            <person name="Baker S.G."/>
            <person name="Basham D."/>
            <person name="Bowman S."/>
            <person name="Brooks K."/>
            <person name="Brown D."/>
            <person name="Brown S."/>
            <person name="Chillingworth T."/>
            <person name="Churcher C.M."/>
            <person name="Collins M."/>
            <person name="Connor R."/>
            <person name="Cronin A."/>
            <person name="Davis P."/>
            <person name="Feltwell T."/>
            <person name="Fraser A."/>
            <person name="Gentles S."/>
            <person name="Goble A."/>
            <person name="Hamlin N."/>
            <person name="Harris D.E."/>
            <person name="Hidalgo J."/>
            <person name="Hodgson G."/>
            <person name="Holroyd S."/>
            <person name="Hornsby T."/>
            <person name="Howarth S."/>
            <person name="Huckle E.J."/>
            <person name="Hunt S."/>
            <person name="Jagels K."/>
            <person name="James K.D."/>
            <person name="Jones L."/>
            <person name="Jones M."/>
            <person name="Leather S."/>
            <person name="McDonald S."/>
            <person name="McLean J."/>
            <person name="Mooney P."/>
            <person name="Moule S."/>
            <person name="Mungall K.L."/>
            <person name="Murphy L.D."/>
            <person name="Niblett D."/>
            <person name="Odell C."/>
            <person name="Oliver K."/>
            <person name="O'Neil S."/>
            <person name="Pearson D."/>
            <person name="Quail M.A."/>
            <person name="Rabbinowitsch E."/>
            <person name="Rutherford K.M."/>
            <person name="Rutter S."/>
            <person name="Saunders D."/>
            <person name="Seeger K."/>
            <person name="Sharp S."/>
            <person name="Skelton J."/>
            <person name="Simmonds M.N."/>
            <person name="Squares R."/>
            <person name="Squares S."/>
            <person name="Stevens K."/>
            <person name="Taylor K."/>
            <person name="Taylor R.G."/>
            <person name="Tivey A."/>
            <person name="Walsh S.V."/>
            <person name="Warren T."/>
            <person name="Whitehead S."/>
            <person name="Woodward J.R."/>
            <person name="Volckaert G."/>
            <person name="Aert R."/>
            <person name="Robben J."/>
            <person name="Grymonprez B."/>
            <person name="Weltjens I."/>
            <person name="Vanstreels E."/>
            <person name="Rieger M."/>
            <person name="Schaefer M."/>
            <person name="Mueller-Auer S."/>
            <person name="Gabel C."/>
            <person name="Fuchs M."/>
            <person name="Duesterhoeft A."/>
            <person name="Fritzc C."/>
            <person name="Holzer E."/>
            <person name="Moestl D."/>
            <person name="Hilbert H."/>
            <person name="Borzym K."/>
            <person name="Langer I."/>
            <person name="Beck A."/>
            <person name="Lehrach H."/>
            <person name="Reinhardt R."/>
            <person name="Pohl T.M."/>
            <person name="Eger P."/>
            <person name="Zimmermann W."/>
            <person name="Wedler H."/>
            <person name="Wambutt R."/>
            <person name="Purnelle B."/>
            <person name="Goffeau A."/>
            <person name="Cadieu E."/>
            <person name="Dreano S."/>
            <person name="Gloux S."/>
            <person name="Lelaure V."/>
            <person name="Mottier S."/>
            <person name="Galibert F."/>
            <person name="Aves S.J."/>
            <person name="Xiang Z."/>
            <person name="Hunt C."/>
            <person name="Moore K."/>
            <person name="Hurst S.M."/>
            <person name="Lucas M."/>
            <person name="Rochet M."/>
            <person name="Gaillardin C."/>
            <person name="Tallada V.A."/>
            <person name="Garzon A."/>
            <person name="Thode G."/>
            <person name="Daga R.R."/>
            <person name="Cruzado L."/>
            <person name="Jimenez J."/>
            <person name="Sanchez M."/>
            <person name="del Rey F."/>
            <person name="Benito J."/>
            <person name="Dominguez A."/>
            <person name="Revuelta J.L."/>
            <person name="Moreno S."/>
            <person name="Armstrong J."/>
            <person name="Forsburg S.L."/>
            <person name="Cerutti L."/>
            <person name="Lowe T."/>
            <person name="McCombie W.R."/>
            <person name="Paulsen I."/>
            <person name="Potashkin J."/>
            <person name="Shpakovski G.V."/>
            <person name="Ussery D."/>
            <person name="Barrell B.G."/>
            <person name="Nurse P."/>
        </authorList>
    </citation>
    <scope>NUCLEOTIDE SEQUENCE [LARGE SCALE GENOMIC DNA]</scope>
    <source>
        <strain>972 / ATCC 24843</strain>
    </source>
</reference>
<reference key="2">
    <citation type="journal article" date="2011" name="Science">
        <title>Comparative functional genomics of the fission yeasts.</title>
        <authorList>
            <person name="Rhind N."/>
            <person name="Chen Z."/>
            <person name="Yassour M."/>
            <person name="Thompson D.A."/>
            <person name="Haas B.J."/>
            <person name="Habib N."/>
            <person name="Wapinski I."/>
            <person name="Roy S."/>
            <person name="Lin M.F."/>
            <person name="Heiman D.I."/>
            <person name="Young S.K."/>
            <person name="Furuya K."/>
            <person name="Guo Y."/>
            <person name="Pidoux A."/>
            <person name="Chen H.M."/>
            <person name="Robbertse B."/>
            <person name="Goldberg J.M."/>
            <person name="Aoki K."/>
            <person name="Bayne E.H."/>
            <person name="Berlin A.M."/>
            <person name="Desjardins C.A."/>
            <person name="Dobbs E."/>
            <person name="Dukaj L."/>
            <person name="Fan L."/>
            <person name="FitzGerald M.G."/>
            <person name="French C."/>
            <person name="Gujja S."/>
            <person name="Hansen K."/>
            <person name="Keifenheim D."/>
            <person name="Levin J.Z."/>
            <person name="Mosher R.A."/>
            <person name="Mueller C.A."/>
            <person name="Pfiffner J."/>
            <person name="Priest M."/>
            <person name="Russ C."/>
            <person name="Smialowska A."/>
            <person name="Swoboda P."/>
            <person name="Sykes S.M."/>
            <person name="Vaughn M."/>
            <person name="Vengrova S."/>
            <person name="Yoder R."/>
            <person name="Zeng Q."/>
            <person name="Allshire R."/>
            <person name="Baulcombe D."/>
            <person name="Birren B.W."/>
            <person name="Brown W."/>
            <person name="Ekwall K."/>
            <person name="Kellis M."/>
            <person name="Leatherwood J."/>
            <person name="Levin H."/>
            <person name="Margalit H."/>
            <person name="Martienssen R."/>
            <person name="Nieduszynski C.A."/>
            <person name="Spatafora J.W."/>
            <person name="Friedman N."/>
            <person name="Dalgaard J.Z."/>
            <person name="Baumann P."/>
            <person name="Niki H."/>
            <person name="Regev A."/>
            <person name="Nusbaum C."/>
        </authorList>
    </citation>
    <scope>REVISION OF GENE MODEL</scope>
</reference>
<reference key="3">
    <citation type="journal article" date="2006" name="Nat. Biotechnol.">
        <title>ORFeome cloning and global analysis of protein localization in the fission yeast Schizosaccharomyces pombe.</title>
        <authorList>
            <person name="Matsuyama A."/>
            <person name="Arai R."/>
            <person name="Yashiroda Y."/>
            <person name="Shirai A."/>
            <person name="Kamata A."/>
            <person name="Sekido S."/>
            <person name="Kobayashi Y."/>
            <person name="Hashimoto A."/>
            <person name="Hamamoto M."/>
            <person name="Hiraoka Y."/>
            <person name="Horinouchi S."/>
            <person name="Yoshida M."/>
        </authorList>
    </citation>
    <scope>SUBCELLULAR LOCATION [LARGE SCALE ANALYSIS]</scope>
</reference>
<protein>
    <recommendedName>
        <fullName>Aconitate hydratase, mitochondrial</fullName>
        <shortName>Aconitase</shortName>
        <ecNumber>4.2.1.3</ecNumber>
    </recommendedName>
    <alternativeName>
        <fullName>Citrate hydro-lyase</fullName>
    </alternativeName>
</protein>
<comment type="function">
    <text evidence="1">Catalyzes the isomerization of citrate to isocitrate via cis-aconitate, a step in the citric acid cycle.</text>
</comment>
<comment type="catalytic activity">
    <reaction>
        <text>citrate = D-threo-isocitrate</text>
        <dbReference type="Rhea" id="RHEA:10336"/>
        <dbReference type="ChEBI" id="CHEBI:15562"/>
        <dbReference type="ChEBI" id="CHEBI:16947"/>
        <dbReference type="EC" id="4.2.1.3"/>
    </reaction>
</comment>
<comment type="cofactor">
    <cofactor evidence="1">
        <name>[4Fe-4S] cluster</name>
        <dbReference type="ChEBI" id="CHEBI:49883"/>
    </cofactor>
    <text evidence="1">Binds 1 [4Fe-4S] cluster per subunit.</text>
</comment>
<comment type="pathway">
    <text>Carbohydrate metabolism; tricarboxylic acid cycle; isocitrate from oxaloacetate: step 2/2.</text>
</comment>
<comment type="subunit">
    <text evidence="1">Monomer.</text>
</comment>
<comment type="subcellular location">
    <subcellularLocation>
        <location evidence="3">Mitochondrion</location>
    </subcellularLocation>
</comment>
<comment type="similarity">
    <text evidence="4">Belongs to the aconitase/IPM isomerase family.</text>
</comment>
<gene>
    <name type="ORF">SPAC24C9.06c</name>
</gene>
<keyword id="KW-0004">4Fe-4S</keyword>
<keyword id="KW-0408">Iron</keyword>
<keyword id="KW-0411">Iron-sulfur</keyword>
<keyword id="KW-0456">Lyase</keyword>
<keyword id="KW-0479">Metal-binding</keyword>
<keyword id="KW-0496">Mitochondrion</keyword>
<keyword id="KW-1185">Reference proteome</keyword>
<keyword id="KW-0809">Transit peptide</keyword>
<keyword id="KW-0816">Tricarboxylic acid cycle</keyword>
<sequence>MFCKISRAPARMGSRIFTQSTLRSFSCAPVAANIDAKKVAMSNFEKNKFINYQRIKDNLEIVKKRLNRPLTYSEKILYGHLDDPVNQDIERGVSYLKLRPDRVACQDATAQMAILQFMSAGMPEVAVPVTVHCDHLIEAYEGGPIDLERANVTNKEVYDFLQTACAKYNIGFWRPGSGIIHQIVLENYAFPGGLLIGTDSHTPNAGGLGMVAIGVGGADAVDVMANLPWELKCPKVIGVKLTGQLKGWTSPKDVILKVAGILTVKGGTGAIVEYFGPGVESLSCTGMGTICNMGAEIGATTSIFPFNPRMSEYLRATNRSAIADYAEEFAPIIAADENAHYDQIIEIDLNTLEPHLNGPFTPDLATPISKFKEAVKKNDWPQELKVGLIGSCTNSSYEDMSRAASICQQAIDKGIKTKSLFTITPGSEQVRATLTRDGQLDTMRKAGGIVLANACGPCIGQWKRTDVKKGEKNSIVTSYNRNFTGRNDANPATHAFVTSPDIVTAMVFSGDMNFNPLTDTLKDKDGNDFKFEPPTGAGLPSKGYDPGSNTYVAPSSVNVKDVAIDPHSKRLQRLTPFKKWDGKDMKGLKILIKAKGKCTTDHISAAGPWLKYRGHLQNISNNYMIGAINAENGEANKLKDQLTGEYKTVPNVAIDYRDHGIRWVTLGEQNFGEGSSREHAALEPRYLGGAAVITKSFARIHETNLKKQGLLPLTFADPAAYDKISPFDTVDIDGLTTFAPGKPLTLVVHPADGSAEWSTKLNHTFNKDQIEWFKAGSALNHMANMHKQK</sequence>
<dbReference type="EC" id="4.2.1.3"/>
<dbReference type="EMBL" id="CU329670">
    <property type="protein sequence ID" value="CAB11263.2"/>
    <property type="molecule type" value="Genomic_DNA"/>
</dbReference>
<dbReference type="PIR" id="T38347">
    <property type="entry name" value="T38347"/>
</dbReference>
<dbReference type="SMR" id="O13966"/>
<dbReference type="BioGRID" id="277955">
    <property type="interactions" value="2"/>
</dbReference>
<dbReference type="FunCoup" id="O13966">
    <property type="interactions" value="604"/>
</dbReference>
<dbReference type="STRING" id="284812.O13966"/>
<dbReference type="iPTMnet" id="O13966"/>
<dbReference type="PaxDb" id="4896-SPAC24C9.06c.1"/>
<dbReference type="EnsemblFungi" id="SPAC24C9.06c.1">
    <property type="protein sequence ID" value="SPAC24C9.06c.1:pep"/>
    <property type="gene ID" value="SPAC24C9.06c"/>
</dbReference>
<dbReference type="KEGG" id="spo:2541450"/>
<dbReference type="PomBase" id="SPAC24C9.06c"/>
<dbReference type="VEuPathDB" id="FungiDB:SPAC24C9.06c"/>
<dbReference type="eggNOG" id="KOG0453">
    <property type="taxonomic scope" value="Eukaryota"/>
</dbReference>
<dbReference type="HOGENOM" id="CLU_006714_2_2_1"/>
<dbReference type="InParanoid" id="O13966"/>
<dbReference type="OMA" id="KKQGMLG"/>
<dbReference type="Reactome" id="R-SPO-71403">
    <property type="pathway name" value="Citric acid cycle (TCA cycle)"/>
</dbReference>
<dbReference type="Reactome" id="R-SPO-9837999">
    <property type="pathway name" value="Mitochondrial protein degradation"/>
</dbReference>
<dbReference type="Reactome" id="R-SPO-9854311">
    <property type="pathway name" value="Maturation of TCA enzymes and regulation of TCA cycle"/>
</dbReference>
<dbReference type="UniPathway" id="UPA00223">
    <property type="reaction ID" value="UER00718"/>
</dbReference>
<dbReference type="PRO" id="PR:O13966"/>
<dbReference type="Proteomes" id="UP000002485">
    <property type="component" value="Chromosome I"/>
</dbReference>
<dbReference type="GO" id="GO:0005829">
    <property type="term" value="C:cytosol"/>
    <property type="evidence" value="ECO:0000318"/>
    <property type="project" value="GO_Central"/>
</dbReference>
<dbReference type="GO" id="GO:0005759">
    <property type="term" value="C:mitochondrial matrix"/>
    <property type="evidence" value="ECO:0000266"/>
    <property type="project" value="PomBase"/>
</dbReference>
<dbReference type="GO" id="GO:0005739">
    <property type="term" value="C:mitochondrion"/>
    <property type="evidence" value="ECO:0000314"/>
    <property type="project" value="PomBase"/>
</dbReference>
<dbReference type="GO" id="GO:0051539">
    <property type="term" value="F:4 iron, 4 sulfur cluster binding"/>
    <property type="evidence" value="ECO:0000318"/>
    <property type="project" value="GO_Central"/>
</dbReference>
<dbReference type="GO" id="GO:0003994">
    <property type="term" value="F:aconitate hydratase activity"/>
    <property type="evidence" value="ECO:0000318"/>
    <property type="project" value="GO_Central"/>
</dbReference>
<dbReference type="GO" id="GO:0046872">
    <property type="term" value="F:metal ion binding"/>
    <property type="evidence" value="ECO:0007669"/>
    <property type="project" value="UniProtKB-KW"/>
</dbReference>
<dbReference type="GO" id="GO:0006099">
    <property type="term" value="P:tricarboxylic acid cycle"/>
    <property type="evidence" value="ECO:0000269"/>
    <property type="project" value="PomBase"/>
</dbReference>
<dbReference type="CDD" id="cd01578">
    <property type="entry name" value="AcnA_Mitochon_Swivel"/>
    <property type="match status" value="1"/>
</dbReference>
<dbReference type="CDD" id="cd01584">
    <property type="entry name" value="AcnA_Mitochondrial"/>
    <property type="match status" value="1"/>
</dbReference>
<dbReference type="FunFam" id="3.20.19.10:FF:000002">
    <property type="entry name" value="Aconitate hydratase, mitochondrial"/>
    <property type="match status" value="1"/>
</dbReference>
<dbReference type="FunFam" id="3.30.499.10:FF:000003">
    <property type="entry name" value="Aconitate hydratase, mitochondrial"/>
    <property type="match status" value="1"/>
</dbReference>
<dbReference type="FunFam" id="3.30.499.10:FF:000004">
    <property type="entry name" value="Aconitate hydratase, mitochondrial"/>
    <property type="match status" value="1"/>
</dbReference>
<dbReference type="FunFam" id="3.40.1060.10:FF:000001">
    <property type="entry name" value="Aconitate hydratase, mitochondrial"/>
    <property type="match status" value="1"/>
</dbReference>
<dbReference type="Gene3D" id="3.40.1060.10">
    <property type="entry name" value="Aconitase, Domain 2"/>
    <property type="match status" value="1"/>
</dbReference>
<dbReference type="Gene3D" id="3.30.499.10">
    <property type="entry name" value="Aconitase, domain 3"/>
    <property type="match status" value="2"/>
</dbReference>
<dbReference type="Gene3D" id="3.20.19.10">
    <property type="entry name" value="Aconitase, domain 4"/>
    <property type="match status" value="1"/>
</dbReference>
<dbReference type="InterPro" id="IPR015931">
    <property type="entry name" value="Acnase/IPM_dHydase_lsu_aba_1/3"/>
</dbReference>
<dbReference type="InterPro" id="IPR001030">
    <property type="entry name" value="Acoase/IPM_deHydtase_lsu_aba"/>
</dbReference>
<dbReference type="InterPro" id="IPR015928">
    <property type="entry name" value="Aconitase/3IPM_dehydase_swvl"/>
</dbReference>
<dbReference type="InterPro" id="IPR050926">
    <property type="entry name" value="Aconitase/IPM_isomerase"/>
</dbReference>
<dbReference type="InterPro" id="IPR018136">
    <property type="entry name" value="Aconitase_4Fe-4S_BS"/>
</dbReference>
<dbReference type="InterPro" id="IPR036008">
    <property type="entry name" value="Aconitase_4Fe-4S_dom"/>
</dbReference>
<dbReference type="InterPro" id="IPR015932">
    <property type="entry name" value="Aconitase_dom2"/>
</dbReference>
<dbReference type="InterPro" id="IPR006248">
    <property type="entry name" value="Aconitase_mito-like"/>
</dbReference>
<dbReference type="InterPro" id="IPR000573">
    <property type="entry name" value="AconitaseA/IPMdHydase_ssu_swvl"/>
</dbReference>
<dbReference type="NCBIfam" id="TIGR01340">
    <property type="entry name" value="aconitase_mito"/>
    <property type="match status" value="1"/>
</dbReference>
<dbReference type="NCBIfam" id="NF005558">
    <property type="entry name" value="PRK07229.1"/>
    <property type="match status" value="1"/>
</dbReference>
<dbReference type="PANTHER" id="PTHR43160">
    <property type="entry name" value="ACONITATE HYDRATASE B"/>
    <property type="match status" value="1"/>
</dbReference>
<dbReference type="PANTHER" id="PTHR43160:SF3">
    <property type="entry name" value="ACONITATE HYDRATASE, MITOCHONDRIAL"/>
    <property type="match status" value="1"/>
</dbReference>
<dbReference type="Pfam" id="PF00330">
    <property type="entry name" value="Aconitase"/>
    <property type="match status" value="1"/>
</dbReference>
<dbReference type="Pfam" id="PF00694">
    <property type="entry name" value="Aconitase_C"/>
    <property type="match status" value="1"/>
</dbReference>
<dbReference type="PRINTS" id="PR00415">
    <property type="entry name" value="ACONITASE"/>
</dbReference>
<dbReference type="SUPFAM" id="SSF53732">
    <property type="entry name" value="Aconitase iron-sulfur domain"/>
    <property type="match status" value="1"/>
</dbReference>
<dbReference type="SUPFAM" id="SSF52016">
    <property type="entry name" value="LeuD/IlvD-like"/>
    <property type="match status" value="1"/>
</dbReference>
<dbReference type="PROSITE" id="PS00450">
    <property type="entry name" value="ACONITASE_1"/>
    <property type="match status" value="1"/>
</dbReference>
<dbReference type="PROSITE" id="PS01244">
    <property type="entry name" value="ACONITASE_2"/>
    <property type="match status" value="1"/>
</dbReference>
<accession>O13966</accession>
<feature type="transit peptide" description="Mitochondrion" evidence="2">
    <location>
        <begin position="1"/>
        <end position="32"/>
    </location>
</feature>
<feature type="chain" id="PRO_0000000546" description="Aconitate hydratase, mitochondrial">
    <location>
        <begin position="33"/>
        <end position="789"/>
    </location>
</feature>
<feature type="binding site" evidence="1">
    <location>
        <position position="106"/>
    </location>
    <ligand>
        <name>substrate</name>
    </ligand>
</feature>
<feature type="binding site" evidence="1">
    <location>
        <begin position="199"/>
        <end position="201"/>
    </location>
    <ligand>
        <name>substrate</name>
    </ligand>
</feature>
<feature type="binding site" evidence="1">
    <location>
        <position position="392"/>
    </location>
    <ligand>
        <name>[4Fe-4S] cluster</name>
        <dbReference type="ChEBI" id="CHEBI:49883"/>
    </ligand>
</feature>
<feature type="binding site" evidence="1">
    <location>
        <position position="455"/>
    </location>
    <ligand>
        <name>[4Fe-4S] cluster</name>
        <dbReference type="ChEBI" id="CHEBI:49883"/>
    </ligand>
</feature>
<feature type="binding site" evidence="1">
    <location>
        <position position="458"/>
    </location>
    <ligand>
        <name>[4Fe-4S] cluster</name>
        <dbReference type="ChEBI" id="CHEBI:49883"/>
    </ligand>
</feature>
<feature type="binding site" evidence="1">
    <location>
        <position position="481"/>
    </location>
    <ligand>
        <name>substrate</name>
    </ligand>
</feature>
<feature type="binding site" evidence="1">
    <location>
        <position position="486"/>
    </location>
    <ligand>
        <name>substrate</name>
    </ligand>
</feature>
<feature type="binding site" evidence="1">
    <location>
        <position position="613"/>
    </location>
    <ligand>
        <name>substrate</name>
    </ligand>
</feature>
<feature type="binding site" evidence="1">
    <location>
        <begin position="676"/>
        <end position="677"/>
    </location>
    <ligand>
        <name>substrate</name>
    </ligand>
</feature>
<name>ACON_SCHPO</name>